<organism>
    <name type="scientific">Mus musculus</name>
    <name type="common">Mouse</name>
    <dbReference type="NCBI Taxonomy" id="10090"/>
    <lineage>
        <taxon>Eukaryota</taxon>
        <taxon>Metazoa</taxon>
        <taxon>Chordata</taxon>
        <taxon>Craniata</taxon>
        <taxon>Vertebrata</taxon>
        <taxon>Euteleostomi</taxon>
        <taxon>Mammalia</taxon>
        <taxon>Eutheria</taxon>
        <taxon>Euarchontoglires</taxon>
        <taxon>Glires</taxon>
        <taxon>Rodentia</taxon>
        <taxon>Myomorpha</taxon>
        <taxon>Muroidea</taxon>
        <taxon>Muridae</taxon>
        <taxon>Murinae</taxon>
        <taxon>Mus</taxon>
        <taxon>Mus</taxon>
    </lineage>
</organism>
<feature type="signal peptide">
    <location>
        <begin position="1"/>
        <end position="22"/>
    </location>
</feature>
<feature type="chain" id="PRO_0000034550" description="Tumor necrosis factor receptor superfamily member 1B">
    <location>
        <begin position="23"/>
        <end position="474"/>
    </location>
</feature>
<feature type="topological domain" description="Extracellular" evidence="3">
    <location>
        <begin position="23"/>
        <end position="258"/>
    </location>
</feature>
<feature type="transmembrane region" description="Helical" evidence="3">
    <location>
        <begin position="259"/>
        <end position="288"/>
    </location>
</feature>
<feature type="topological domain" description="Cytoplasmic" evidence="3">
    <location>
        <begin position="289"/>
        <end position="474"/>
    </location>
</feature>
<feature type="repeat" description="TNFR-Cys 1">
    <location>
        <begin position="39"/>
        <end position="77"/>
    </location>
</feature>
<feature type="repeat" description="TNFR-Cys 2">
    <location>
        <begin position="78"/>
        <end position="119"/>
    </location>
</feature>
<feature type="repeat" description="TNFR-Cys 3">
    <location>
        <begin position="120"/>
        <end position="164"/>
    </location>
</feature>
<feature type="repeat" description="TNFR-Cys 4">
    <location>
        <begin position="165"/>
        <end position="203"/>
    </location>
</feature>
<feature type="region of interest" description="Disordered" evidence="5">
    <location>
        <begin position="220"/>
        <end position="243"/>
    </location>
</feature>
<feature type="region of interest" description="Disordered" evidence="5">
    <location>
        <begin position="295"/>
        <end position="314"/>
    </location>
</feature>
<feature type="region of interest" description="Disordered" evidence="5">
    <location>
        <begin position="321"/>
        <end position="378"/>
    </location>
</feature>
<feature type="region of interest" description="Disordered" evidence="5">
    <location>
        <begin position="397"/>
        <end position="463"/>
    </location>
</feature>
<feature type="compositionally biased region" description="Basic and acidic residues" evidence="5">
    <location>
        <begin position="297"/>
        <end position="310"/>
    </location>
</feature>
<feature type="compositionally biased region" description="Low complexity" evidence="5">
    <location>
        <begin position="324"/>
        <end position="338"/>
    </location>
</feature>
<feature type="compositionally biased region" description="Low complexity" evidence="5">
    <location>
        <begin position="363"/>
        <end position="378"/>
    </location>
</feature>
<feature type="compositionally biased region" description="Polar residues" evidence="5">
    <location>
        <begin position="429"/>
        <end position="442"/>
    </location>
</feature>
<feature type="modified residue" description="Phosphoserine" evidence="2">
    <location>
        <position position="331"/>
    </location>
</feature>
<feature type="glycosylation site" description="O-linked (GalNAc...) threonine" evidence="2">
    <location>
        <position position="30"/>
    </location>
</feature>
<feature type="glycosylation site" description="N-linked (GlcNAc...) asparagine" evidence="3">
    <location>
        <position position="69"/>
    </location>
</feature>
<feature type="glycosylation site" description="N-linked (GlcNAc...) asparagine" evidence="3">
    <location>
        <position position="195"/>
    </location>
</feature>
<feature type="glycosylation site" description="O-linked (GalNAc...) threonine" evidence="2">
    <location>
        <position position="208"/>
    </location>
</feature>
<feature type="glycosylation site" description="O-linked (GalNAc...) threonine" evidence="2">
    <location>
        <position position="224"/>
    </location>
</feature>
<feature type="disulfide bond" evidence="4">
    <location>
        <begin position="40"/>
        <end position="54"/>
    </location>
</feature>
<feature type="disulfide bond" evidence="4">
    <location>
        <begin position="55"/>
        <end position="68"/>
    </location>
</feature>
<feature type="disulfide bond" evidence="4">
    <location>
        <begin position="58"/>
        <end position="76"/>
    </location>
</feature>
<feature type="disulfide bond" evidence="4">
    <location>
        <begin position="79"/>
        <end position="94"/>
    </location>
</feature>
<feature type="disulfide bond" evidence="4">
    <location>
        <begin position="97"/>
        <end position="111"/>
    </location>
</feature>
<feature type="disulfide bond" evidence="4">
    <location>
        <begin position="101"/>
        <end position="119"/>
    </location>
</feature>
<feature type="disulfide bond" evidence="4">
    <location>
        <begin position="121"/>
        <end position="127"/>
    </location>
</feature>
<feature type="disulfide bond" evidence="4">
    <location>
        <begin position="136"/>
        <end position="145"/>
    </location>
</feature>
<feature type="disulfide bond" evidence="4">
    <location>
        <begin position="139"/>
        <end position="163"/>
    </location>
</feature>
<feature type="disulfide bond" evidence="4">
    <location>
        <begin position="166"/>
        <end position="181"/>
    </location>
</feature>
<feature type="sequence conflict" description="In Ref. 3; CAA74969." evidence="6" ref="3">
    <original>D</original>
    <variation>DSDTVCAD</variation>
    <location>
        <position position="78"/>
    </location>
</feature>
<feature type="sequence conflict" description="In Ref. 3; CAA74969." evidence="6" ref="3">
    <original>T</original>
    <variation>S</variation>
    <location>
        <position position="102"/>
    </location>
</feature>
<feature type="sequence conflict" description="In Ref. 3; CAA74969." evidence="6" ref="3">
    <original>I</original>
    <variation>T</variation>
    <location>
        <position position="108"/>
    </location>
</feature>
<feature type="sequence conflict" description="In Ref. 3; CAA74969." evidence="6" ref="3">
    <original>I</original>
    <variation>F</variation>
    <location>
        <position position="283"/>
    </location>
</feature>
<feature type="sequence conflict" description="In Ref. 3; CAA74969." evidence="6" ref="3">
    <original>S</original>
    <variation>SS</variation>
    <location>
        <position position="331"/>
    </location>
</feature>
<feature type="sequence conflict" description="In Ref. 3; CAA74969." evidence="6" ref="3">
    <original>F</original>
    <variation>S</variation>
    <location>
        <position position="360"/>
    </location>
</feature>
<feature type="sequence conflict" description="In Ref. 3; CAA74969." evidence="6" ref="3">
    <original>C</original>
    <variation>Y</variation>
    <location>
        <position position="436"/>
    </location>
</feature>
<comment type="function">
    <text evidence="1">Receptor with high affinity for TNFSF2/TNF-alpha and approximately 5-fold lower affinity for homotrimeric TNFSF1/lymphotoxin-alpha. The TRAF1/TRAF2 complex recruits the apoptotic suppressors BIRC2 and BIRC3 to TNFRSF1B/TNFR2 (By similarity).</text>
</comment>
<comment type="subunit">
    <text evidence="2">Binds to TRAF2. Interacts with BMX. Interacts (activated form) with XPNPEP3.</text>
</comment>
<comment type="subcellular location">
    <subcellularLocation>
        <location>Membrane</location>
        <topology>Single-pass type I membrane protein</topology>
    </subcellularLocation>
</comment>
<name>TNR1B_MOUSE</name>
<dbReference type="EMBL" id="M60469">
    <property type="protein sequence ID" value="AAA39752.1"/>
    <property type="molecule type" value="mRNA"/>
</dbReference>
<dbReference type="EMBL" id="M59378">
    <property type="protein sequence ID" value="AAA40463.1"/>
    <property type="molecule type" value="mRNA"/>
</dbReference>
<dbReference type="EMBL" id="Y14619">
    <property type="protein sequence ID" value="CAA74969.1"/>
    <property type="molecule type" value="Genomic_DNA"/>
</dbReference>
<dbReference type="EMBL" id="Y14620">
    <property type="protein sequence ID" value="CAA74969.1"/>
    <property type="status" value="JOINED"/>
    <property type="molecule type" value="Genomic_DNA"/>
</dbReference>
<dbReference type="EMBL" id="Y14621">
    <property type="protein sequence ID" value="CAA74969.1"/>
    <property type="status" value="JOINED"/>
    <property type="molecule type" value="Genomic_DNA"/>
</dbReference>
<dbReference type="EMBL" id="Y14622">
    <property type="protein sequence ID" value="CAA74969.1"/>
    <property type="status" value="JOINED"/>
    <property type="molecule type" value="Genomic_DNA"/>
</dbReference>
<dbReference type="EMBL" id="Y14679">
    <property type="protein sequence ID" value="CAA74969.1"/>
    <property type="status" value="JOINED"/>
    <property type="molecule type" value="Genomic_DNA"/>
</dbReference>
<dbReference type="EMBL" id="Y14623">
    <property type="protein sequence ID" value="CAA74969.1"/>
    <property type="status" value="JOINED"/>
    <property type="molecule type" value="Genomic_DNA"/>
</dbReference>
<dbReference type="EMBL" id="U39488">
    <property type="protein sequence ID" value="AAA85021.1"/>
    <property type="molecule type" value="Genomic_DNA"/>
</dbReference>
<dbReference type="EMBL" id="X87128">
    <property type="protein sequence ID" value="CAA60618.1"/>
    <property type="molecule type" value="Genomic_DNA"/>
</dbReference>
<dbReference type="CCDS" id="CCDS18914.1"/>
<dbReference type="PIR" id="B38634">
    <property type="entry name" value="B38634"/>
</dbReference>
<dbReference type="RefSeq" id="NP_035740.2">
    <property type="nucleotide sequence ID" value="NM_011610.3"/>
</dbReference>
<dbReference type="SMR" id="P25119"/>
<dbReference type="BioGRID" id="204250">
    <property type="interactions" value="4"/>
</dbReference>
<dbReference type="CORUM" id="P25119"/>
<dbReference type="DIP" id="DIP-60902N"/>
<dbReference type="FunCoup" id="P25119">
    <property type="interactions" value="515"/>
</dbReference>
<dbReference type="IntAct" id="P25119">
    <property type="interactions" value="4"/>
</dbReference>
<dbReference type="MINT" id="P25119"/>
<dbReference type="STRING" id="10090.ENSMUSP00000030336"/>
<dbReference type="GlyCosmos" id="P25119">
    <property type="glycosylation" value="5 sites, No reported glycans"/>
</dbReference>
<dbReference type="GlyGen" id="P25119">
    <property type="glycosylation" value="5 sites"/>
</dbReference>
<dbReference type="PhosphoSitePlus" id="P25119"/>
<dbReference type="SwissPalm" id="P25119"/>
<dbReference type="PaxDb" id="10090-ENSMUSP00000030336"/>
<dbReference type="PeptideAtlas" id="P25119"/>
<dbReference type="ProteomicsDB" id="259480"/>
<dbReference type="Antibodypedia" id="1344">
    <property type="antibodies" value="1102 antibodies from 49 providers"/>
</dbReference>
<dbReference type="DNASU" id="21938"/>
<dbReference type="Ensembl" id="ENSMUST00000030336.11">
    <property type="protein sequence ID" value="ENSMUSP00000030336.5"/>
    <property type="gene ID" value="ENSMUSG00000028599.11"/>
</dbReference>
<dbReference type="GeneID" id="21938"/>
<dbReference type="KEGG" id="mmu:21938"/>
<dbReference type="UCSC" id="uc008vrt.1">
    <property type="organism name" value="mouse"/>
</dbReference>
<dbReference type="AGR" id="MGI:1314883"/>
<dbReference type="CTD" id="7133"/>
<dbReference type="MGI" id="MGI:1314883">
    <property type="gene designation" value="Tnfrsf1b"/>
</dbReference>
<dbReference type="VEuPathDB" id="HostDB:ENSMUSG00000028599"/>
<dbReference type="eggNOG" id="ENOG502RZ23">
    <property type="taxonomic scope" value="Eukaryota"/>
</dbReference>
<dbReference type="GeneTree" id="ENSGT00940000161800"/>
<dbReference type="HOGENOM" id="CLU_047256_0_0_1"/>
<dbReference type="InParanoid" id="P25119"/>
<dbReference type="OMA" id="CAPCEDS"/>
<dbReference type="OrthoDB" id="9450607at2759"/>
<dbReference type="PhylomeDB" id="P25119"/>
<dbReference type="TreeFam" id="TF331157"/>
<dbReference type="Reactome" id="R-MMU-5668541">
    <property type="pathway name" value="TNFR2 non-canonical NF-kB pathway"/>
</dbReference>
<dbReference type="Reactome" id="R-MMU-5669034">
    <property type="pathway name" value="TNFs bind their physiological receptors"/>
</dbReference>
<dbReference type="Reactome" id="R-MMU-6798695">
    <property type="pathway name" value="Neutrophil degranulation"/>
</dbReference>
<dbReference type="BioGRID-ORCS" id="21938">
    <property type="hits" value="10 hits in 81 CRISPR screens"/>
</dbReference>
<dbReference type="ChiTaRS" id="Tnfrsf1b">
    <property type="organism name" value="mouse"/>
</dbReference>
<dbReference type="PRO" id="PR:P25119"/>
<dbReference type="Proteomes" id="UP000000589">
    <property type="component" value="Chromosome 4"/>
</dbReference>
<dbReference type="RNAct" id="P25119">
    <property type="molecule type" value="protein"/>
</dbReference>
<dbReference type="Bgee" id="ENSMUSG00000028599">
    <property type="expression patterns" value="Expressed in decidua and 164 other cell types or tissues"/>
</dbReference>
<dbReference type="ExpressionAtlas" id="P25119">
    <property type="expression patterns" value="baseline and differential"/>
</dbReference>
<dbReference type="GO" id="GO:0016020">
    <property type="term" value="C:membrane"/>
    <property type="evidence" value="ECO:0000314"/>
    <property type="project" value="MGI"/>
</dbReference>
<dbReference type="GO" id="GO:0045121">
    <property type="term" value="C:membrane raft"/>
    <property type="evidence" value="ECO:0000314"/>
    <property type="project" value="BHF-UCL"/>
</dbReference>
<dbReference type="GO" id="GO:0043120">
    <property type="term" value="F:tumor necrosis factor binding"/>
    <property type="evidence" value="ECO:0007669"/>
    <property type="project" value="Ensembl"/>
</dbReference>
<dbReference type="GO" id="GO:0005031">
    <property type="term" value="F:tumor necrosis factor receptor activity"/>
    <property type="evidence" value="ECO:0000353"/>
    <property type="project" value="MGI"/>
</dbReference>
<dbReference type="GO" id="GO:0031625">
    <property type="term" value="F:ubiquitin protein ligase binding"/>
    <property type="evidence" value="ECO:0007669"/>
    <property type="project" value="Ensembl"/>
</dbReference>
<dbReference type="GO" id="GO:0003176">
    <property type="term" value="P:aortic valve development"/>
    <property type="evidence" value="ECO:0000316"/>
    <property type="project" value="BHF-UCL"/>
</dbReference>
<dbReference type="GO" id="GO:0007166">
    <property type="term" value="P:cell surface receptor signaling pathway"/>
    <property type="evidence" value="ECO:0000315"/>
    <property type="project" value="MGI"/>
</dbReference>
<dbReference type="GO" id="GO:0071222">
    <property type="term" value="P:cellular response to lipopolysaccharide"/>
    <property type="evidence" value="ECO:0007669"/>
    <property type="project" value="Ensembl"/>
</dbReference>
<dbReference type="GO" id="GO:0097191">
    <property type="term" value="P:extrinsic apoptotic signaling pathway"/>
    <property type="evidence" value="ECO:0000315"/>
    <property type="project" value="MGI"/>
</dbReference>
<dbReference type="GO" id="GO:0150098">
    <property type="term" value="P:glial cell-neuron signaling"/>
    <property type="evidence" value="ECO:0000315"/>
    <property type="project" value="ARUK-UCL"/>
</dbReference>
<dbReference type="GO" id="GO:0006954">
    <property type="term" value="P:inflammatory response"/>
    <property type="evidence" value="ECO:0000315"/>
    <property type="project" value="MGI"/>
</dbReference>
<dbReference type="GO" id="GO:0008630">
    <property type="term" value="P:intrinsic apoptotic signaling pathway in response to DNA damage"/>
    <property type="evidence" value="ECO:0000315"/>
    <property type="project" value="MGI"/>
</dbReference>
<dbReference type="GO" id="GO:0010614">
    <property type="term" value="P:negative regulation of cardiac muscle hypertrophy"/>
    <property type="evidence" value="ECO:0000316"/>
    <property type="project" value="BHF-UCL"/>
</dbReference>
<dbReference type="GO" id="GO:0003332">
    <property type="term" value="P:negative regulation of extracellular matrix constituent secretion"/>
    <property type="evidence" value="ECO:0000316"/>
    <property type="project" value="BHF-UCL"/>
</dbReference>
<dbReference type="GO" id="GO:0050728">
    <property type="term" value="P:negative regulation of inflammatory response"/>
    <property type="evidence" value="ECO:0000315"/>
    <property type="project" value="MGI"/>
</dbReference>
<dbReference type="GO" id="GO:0150079">
    <property type="term" value="P:negative regulation of neuroinflammatory response"/>
    <property type="evidence" value="ECO:0000315"/>
    <property type="project" value="ARUK-UCL"/>
</dbReference>
<dbReference type="GO" id="GO:1902339">
    <property type="term" value="P:positive regulation of apoptotic process involved in morphogenesis"/>
    <property type="evidence" value="ECO:0000316"/>
    <property type="project" value="BHF-UCL"/>
</dbReference>
<dbReference type="GO" id="GO:0051044">
    <property type="term" value="P:positive regulation of membrane protein ectodomain proteolysis"/>
    <property type="evidence" value="ECO:0007669"/>
    <property type="project" value="Ensembl"/>
</dbReference>
<dbReference type="GO" id="GO:0031643">
    <property type="term" value="P:positive regulation of myelination"/>
    <property type="evidence" value="ECO:0000315"/>
    <property type="project" value="ARUK-UCL"/>
</dbReference>
<dbReference type="GO" id="GO:0048714">
    <property type="term" value="P:positive regulation of oligodendrocyte differentiation"/>
    <property type="evidence" value="ECO:0000315"/>
    <property type="project" value="ARUK-UCL"/>
</dbReference>
<dbReference type="GO" id="GO:0003177">
    <property type="term" value="P:pulmonary valve development"/>
    <property type="evidence" value="ECO:0000316"/>
    <property type="project" value="BHF-UCL"/>
</dbReference>
<dbReference type="GO" id="GO:0002718">
    <property type="term" value="P:regulation of cytokine production involved in immune response"/>
    <property type="evidence" value="ECO:0000316"/>
    <property type="project" value="ARUK-UCL"/>
</dbReference>
<dbReference type="GO" id="GO:0031641">
    <property type="term" value="P:regulation of myelination"/>
    <property type="evidence" value="ECO:0000316"/>
    <property type="project" value="ARUK-UCL"/>
</dbReference>
<dbReference type="GO" id="GO:0150077">
    <property type="term" value="P:regulation of neuroinflammatory response"/>
    <property type="evidence" value="ECO:0000316"/>
    <property type="project" value="ARUK-UCL"/>
</dbReference>
<dbReference type="GO" id="GO:0002724">
    <property type="term" value="P:regulation of T cell cytokine production"/>
    <property type="evidence" value="ECO:0000315"/>
    <property type="project" value="ARUK-UCL"/>
</dbReference>
<dbReference type="GO" id="GO:0042129">
    <property type="term" value="P:regulation of T cell proliferation"/>
    <property type="evidence" value="ECO:0000315"/>
    <property type="project" value="ARUK-UCL"/>
</dbReference>
<dbReference type="GO" id="GO:0050779">
    <property type="term" value="P:RNA destabilization"/>
    <property type="evidence" value="ECO:0000315"/>
    <property type="project" value="MGI"/>
</dbReference>
<dbReference type="CDD" id="cd10577">
    <property type="entry name" value="TNFRSF1B"/>
    <property type="match status" value="1"/>
</dbReference>
<dbReference type="FunFam" id="2.10.50.10:FF:000031">
    <property type="entry name" value="Tumor necrosis factor receptor superfamily member 1B"/>
    <property type="match status" value="1"/>
</dbReference>
<dbReference type="FunFam" id="2.10.50.10:FF:000036">
    <property type="entry name" value="Tumor necrosis factor receptor superfamily member 1B"/>
    <property type="match status" value="1"/>
</dbReference>
<dbReference type="Gene3D" id="2.10.50.10">
    <property type="entry name" value="Tumor Necrosis Factor Receptor, subunit A, domain 2"/>
    <property type="match status" value="2"/>
</dbReference>
<dbReference type="InterPro" id="IPR051670">
    <property type="entry name" value="TNF_chemokine_rcpt-like"/>
</dbReference>
<dbReference type="InterPro" id="IPR001368">
    <property type="entry name" value="TNFR/NGFR_Cys_rich_reg"/>
</dbReference>
<dbReference type="InterPro" id="IPR020411">
    <property type="entry name" value="TNFR_1B"/>
</dbReference>
<dbReference type="InterPro" id="IPR033996">
    <property type="entry name" value="TNFRSF1B_N"/>
</dbReference>
<dbReference type="PANTHER" id="PTHR47386">
    <property type="entry name" value="TUMOR NECROSIS FACTOR RECEPTOR SUPERFAMILY MEMBER 1B"/>
    <property type="match status" value="1"/>
</dbReference>
<dbReference type="PANTHER" id="PTHR47386:SF1">
    <property type="entry name" value="TUMOR NECROSIS FACTOR RECEPTOR SUPERFAMILY MEMBER 1B"/>
    <property type="match status" value="1"/>
</dbReference>
<dbReference type="Pfam" id="PF00020">
    <property type="entry name" value="TNFR_c6"/>
    <property type="match status" value="2"/>
</dbReference>
<dbReference type="PRINTS" id="PR01919">
    <property type="entry name" value="TNFACTORR1B"/>
</dbReference>
<dbReference type="SMART" id="SM00208">
    <property type="entry name" value="TNFR"/>
    <property type="match status" value="4"/>
</dbReference>
<dbReference type="SUPFAM" id="SSF57586">
    <property type="entry name" value="TNF receptor-like"/>
    <property type="match status" value="2"/>
</dbReference>
<dbReference type="PROSITE" id="PS00652">
    <property type="entry name" value="TNFR_NGFR_1"/>
    <property type="match status" value="2"/>
</dbReference>
<dbReference type="PROSITE" id="PS50050">
    <property type="entry name" value="TNFR_NGFR_2"/>
    <property type="match status" value="3"/>
</dbReference>
<proteinExistence type="evidence at transcript level"/>
<accession>P25119</accession>
<accession>O88734</accession>
<accession>P97893</accession>
<gene>
    <name type="primary">Tnfrsf1b</name>
    <name type="synonym">Tnfr-2</name>
    <name type="synonym">Tnfr2</name>
</gene>
<evidence type="ECO:0000250" key="1"/>
<evidence type="ECO:0000250" key="2">
    <source>
        <dbReference type="UniProtKB" id="P20333"/>
    </source>
</evidence>
<evidence type="ECO:0000255" key="3"/>
<evidence type="ECO:0000255" key="4">
    <source>
        <dbReference type="PROSITE-ProRule" id="PRU00206"/>
    </source>
</evidence>
<evidence type="ECO:0000256" key="5">
    <source>
        <dbReference type="SAM" id="MobiDB-lite"/>
    </source>
</evidence>
<evidence type="ECO:0000305" key="6"/>
<protein>
    <recommendedName>
        <fullName>Tumor necrosis factor receptor superfamily member 1B</fullName>
    </recommendedName>
    <alternativeName>
        <fullName>Tumor necrosis factor receptor 2</fullName>
        <shortName>TNF-R2</shortName>
    </alternativeName>
    <alternativeName>
        <fullName>Tumor necrosis factor receptor type II</fullName>
        <shortName>TNF-RII</shortName>
        <shortName>TNFR-II</shortName>
    </alternativeName>
    <alternativeName>
        <fullName>p75</fullName>
    </alternativeName>
    <alternativeName>
        <fullName>p80 TNF-alpha receptor</fullName>
    </alternativeName>
    <cdAntigenName>CD120b</cdAntigenName>
</protein>
<keyword id="KW-1015">Disulfide bond</keyword>
<keyword id="KW-0325">Glycoprotein</keyword>
<keyword id="KW-0472">Membrane</keyword>
<keyword id="KW-0597">Phosphoprotein</keyword>
<keyword id="KW-0675">Receptor</keyword>
<keyword id="KW-1185">Reference proteome</keyword>
<keyword id="KW-0677">Repeat</keyword>
<keyword id="KW-0732">Signal</keyword>
<keyword id="KW-0812">Transmembrane</keyword>
<keyword id="KW-1133">Transmembrane helix</keyword>
<sequence>MAPAALWVALVFELQLWATGHTVPAQVVLTPYKPEPGYECQISQEYYDRKAQMCCAKCPPGQYVKHFCNKTSDTVCADCEASMYTQVWNQFRTCLSCSSSCTTDQVEIRACTKQQNRVCACEAGRYCALKTHSGSCRQCMRLSKCGPGFGVASSRAPNGNVLCKACAPGTFSDTTSSTDVCRPHRICSILAIPGNASTDAVCAPESPTLSAIPRTLYVSQPEPTRSQPLDQEPGPSQTPSILTSLGSTPIIEQSTKGGISLPIGLIVGVTSLGLLMLGLVNCIILVQRKKKPSCLQRDAKVPHVPDEKSQDAVGLEQQHLLTTAPSSSSSSLESSASAGDRRAPPGGHPQARVMAEAQGFQEARASSRISDSSHGSHGTHVNVTCIVNVCSSSDHSSQCSSQASATVGDPDAKPSASPKDEQVPFSQEECPSQSPCETTETLQSHEKPLPLGVPDMGMKPSQAGWFDQIAVKVA</sequence>
<reference key="1">
    <citation type="journal article" date="1991" name="Proc. Natl. Acad. Sci. U.S.A.">
        <title>Cloning and expression of cDNAs for two distinct murine tumor necrosis factor receptors demonstrate one receptor is species specific.</title>
        <authorList>
            <person name="Lewis M."/>
            <person name="Tartaglia L.A."/>
            <person name="Lee A."/>
            <person name="Bennett G.L."/>
            <person name="Rice G.C."/>
            <person name="Wong G.H."/>
            <person name="Chen E.Y."/>
            <person name="Goeddel D.V."/>
        </authorList>
    </citation>
    <scope>NUCLEOTIDE SEQUENCE [MRNA]</scope>
</reference>
<reference key="2">
    <citation type="journal article" date="1991" name="Mol. Cell. Biol.">
        <title>Molecular cloning and expression of the type 1 and type 2 murine receptors for tumor necrosis factor.</title>
        <authorList>
            <person name="Goodwin R.G."/>
            <person name="Anderson D."/>
            <person name="Jerzy R."/>
            <person name="Davis T."/>
            <person name="Brannan C.I."/>
            <person name="Copeland N.G."/>
            <person name="Jenkins N.A."/>
            <person name="Smith C.A."/>
        </authorList>
    </citation>
    <scope>NUCLEOTIDE SEQUENCE [MRNA]</scope>
</reference>
<reference key="3">
    <citation type="journal article" date="1998" name="Genomics">
        <title>The mouse tumor necrosis factor receptor 2 gene: genomic structure and characterization of the two transcripts.</title>
        <authorList>
            <person name="Hurle B."/>
            <person name="Segade F."/>
            <person name="Rodriguez R."/>
            <person name="Ramos S.S."/>
            <person name="Lazo P.S."/>
        </authorList>
    </citation>
    <scope>NUCLEOTIDE SEQUENCE [GENOMIC DNA]</scope>
</reference>
<reference key="4">
    <citation type="submission" date="1996-01" db="EMBL/GenBank/DDBJ databases">
        <authorList>
            <person name="Jacob C.O."/>
            <person name="Liu J."/>
        </authorList>
    </citation>
    <scope>NUCLEOTIDE SEQUENCE OF 1-26</scope>
    <source>
        <strain>NOD</strain>
    </source>
</reference>
<reference key="5">
    <citation type="submission" date="1995-05" db="EMBL/GenBank/DDBJ databases">
        <authorList>
            <person name="Kissonerghis M."/>
            <person name="Fellowes R."/>
            <person name="Feldmann M."/>
            <person name="Chernajovsky Y."/>
        </authorList>
    </citation>
    <scope>NUCLEOTIDE SEQUENCE OF 1-22</scope>
    <source>
        <tissue>Liver</tissue>
    </source>
</reference>